<accession>Q8FH89</accession>
<proteinExistence type="inferred from homology"/>
<keyword id="KW-0067">ATP-binding</keyword>
<keyword id="KW-0418">Kinase</keyword>
<keyword id="KW-0460">Magnesium</keyword>
<keyword id="KW-0547">Nucleotide-binding</keyword>
<keyword id="KW-1185">Reference proteome</keyword>
<keyword id="KW-0808">Transferase</keyword>
<gene>
    <name evidence="1" type="primary">pdxY</name>
    <name type="ordered locus">c2028</name>
</gene>
<evidence type="ECO:0000255" key="1">
    <source>
        <dbReference type="HAMAP-Rule" id="MF_01639"/>
    </source>
</evidence>
<comment type="function">
    <text evidence="1">Pyridoxal kinase involved in the salvage pathway of pyridoxal 5'-phosphate (PLP). Catalyzes the phosphorylation of pyridoxal to PLP.</text>
</comment>
<comment type="catalytic activity">
    <reaction evidence="1">
        <text>pyridoxal + ATP = pyridoxal 5'-phosphate + ADP + H(+)</text>
        <dbReference type="Rhea" id="RHEA:10224"/>
        <dbReference type="ChEBI" id="CHEBI:15378"/>
        <dbReference type="ChEBI" id="CHEBI:17310"/>
        <dbReference type="ChEBI" id="CHEBI:30616"/>
        <dbReference type="ChEBI" id="CHEBI:456216"/>
        <dbReference type="ChEBI" id="CHEBI:597326"/>
        <dbReference type="EC" id="2.7.1.35"/>
    </reaction>
</comment>
<comment type="cofactor">
    <cofactor evidence="1">
        <name>Mg(2+)</name>
        <dbReference type="ChEBI" id="CHEBI:18420"/>
    </cofactor>
</comment>
<comment type="pathway">
    <text evidence="1">Cofactor metabolism; pyridoxal 5'-phosphate salvage; pyridoxal 5'-phosphate from pyridoxal: step 1/1.</text>
</comment>
<comment type="subunit">
    <text evidence="1">Homodimer.</text>
</comment>
<comment type="similarity">
    <text evidence="1">Belongs to the pyridoxine kinase family. PdxY subfamily.</text>
</comment>
<reference key="1">
    <citation type="journal article" date="2002" name="Proc. Natl. Acad. Sci. U.S.A.">
        <title>Extensive mosaic structure revealed by the complete genome sequence of uropathogenic Escherichia coli.</title>
        <authorList>
            <person name="Welch R.A."/>
            <person name="Burland V."/>
            <person name="Plunkett G. III"/>
            <person name="Redford P."/>
            <person name="Roesch P."/>
            <person name="Rasko D."/>
            <person name="Buckles E.L."/>
            <person name="Liou S.-R."/>
            <person name="Boutin A."/>
            <person name="Hackett J."/>
            <person name="Stroud D."/>
            <person name="Mayhew G.F."/>
            <person name="Rose D.J."/>
            <person name="Zhou S."/>
            <person name="Schwartz D.C."/>
            <person name="Perna N.T."/>
            <person name="Mobley H.L.T."/>
            <person name="Donnenberg M.S."/>
            <person name="Blattner F.R."/>
        </authorList>
    </citation>
    <scope>NUCLEOTIDE SEQUENCE [LARGE SCALE GENOMIC DNA]</scope>
    <source>
        <strain>CFT073 / ATCC 700928 / UPEC</strain>
    </source>
</reference>
<feature type="chain" id="PRO_0000269809" description="Pyridoxal kinase PdxY">
    <location>
        <begin position="1"/>
        <end position="287"/>
    </location>
</feature>
<feature type="binding site" evidence="1">
    <location>
        <position position="10"/>
    </location>
    <ligand>
        <name>substrate</name>
    </ligand>
</feature>
<feature type="binding site" evidence="1">
    <location>
        <begin position="45"/>
        <end position="46"/>
    </location>
    <ligand>
        <name>substrate</name>
    </ligand>
</feature>
<feature type="binding site" evidence="1">
    <location>
        <position position="112"/>
    </location>
    <ligand>
        <name>ATP</name>
        <dbReference type="ChEBI" id="CHEBI:30616"/>
    </ligand>
</feature>
<feature type="binding site" evidence="1">
    <location>
        <position position="144"/>
    </location>
    <ligand>
        <name>ATP</name>
        <dbReference type="ChEBI" id="CHEBI:30616"/>
    </ligand>
</feature>
<feature type="binding site" evidence="1">
    <location>
        <position position="149"/>
    </location>
    <ligand>
        <name>ATP</name>
        <dbReference type="ChEBI" id="CHEBI:30616"/>
    </ligand>
</feature>
<feature type="binding site" evidence="1">
    <location>
        <position position="182"/>
    </location>
    <ligand>
        <name>ATP</name>
        <dbReference type="ChEBI" id="CHEBI:30616"/>
    </ligand>
</feature>
<feature type="binding site" evidence="1">
    <location>
        <begin position="209"/>
        <end position="212"/>
    </location>
    <ligand>
        <name>ATP</name>
        <dbReference type="ChEBI" id="CHEBI:30616"/>
    </ligand>
</feature>
<feature type="binding site" evidence="1">
    <location>
        <position position="224"/>
    </location>
    <ligand>
        <name>substrate</name>
    </ligand>
</feature>
<protein>
    <recommendedName>
        <fullName evidence="1">Pyridoxal kinase PdxY</fullName>
        <shortName evidence="1">PL kinase</shortName>
        <ecNumber evidence="1">2.7.1.35</ecNumber>
    </recommendedName>
</protein>
<dbReference type="EC" id="2.7.1.35" evidence="1"/>
<dbReference type="EMBL" id="AE014075">
    <property type="protein sequence ID" value="AAN80488.1"/>
    <property type="molecule type" value="Genomic_DNA"/>
</dbReference>
<dbReference type="SMR" id="Q8FH89"/>
<dbReference type="STRING" id="199310.c2028"/>
<dbReference type="KEGG" id="ecc:c2028"/>
<dbReference type="eggNOG" id="COG2240">
    <property type="taxonomic scope" value="Bacteria"/>
</dbReference>
<dbReference type="HOGENOM" id="CLU_046496_3_0_6"/>
<dbReference type="BioCyc" id="ECOL199310:C2028-MONOMER"/>
<dbReference type="UniPathway" id="UPA01068">
    <property type="reaction ID" value="UER00298"/>
</dbReference>
<dbReference type="Proteomes" id="UP000001410">
    <property type="component" value="Chromosome"/>
</dbReference>
<dbReference type="GO" id="GO:0005829">
    <property type="term" value="C:cytosol"/>
    <property type="evidence" value="ECO:0007669"/>
    <property type="project" value="TreeGrafter"/>
</dbReference>
<dbReference type="GO" id="GO:0005524">
    <property type="term" value="F:ATP binding"/>
    <property type="evidence" value="ECO:0007669"/>
    <property type="project" value="UniProtKB-UniRule"/>
</dbReference>
<dbReference type="GO" id="GO:0000287">
    <property type="term" value="F:magnesium ion binding"/>
    <property type="evidence" value="ECO:0007669"/>
    <property type="project" value="UniProtKB-UniRule"/>
</dbReference>
<dbReference type="GO" id="GO:0008478">
    <property type="term" value="F:pyridoxal kinase activity"/>
    <property type="evidence" value="ECO:0007669"/>
    <property type="project" value="UniProtKB-UniRule"/>
</dbReference>
<dbReference type="GO" id="GO:0009443">
    <property type="term" value="P:pyridoxal 5'-phosphate salvage"/>
    <property type="evidence" value="ECO:0007669"/>
    <property type="project" value="UniProtKB-UniRule"/>
</dbReference>
<dbReference type="CDD" id="cd01173">
    <property type="entry name" value="pyridoxal_pyridoxamine_kinase"/>
    <property type="match status" value="1"/>
</dbReference>
<dbReference type="FunFam" id="3.40.1190.20:FF:000008">
    <property type="entry name" value="Pyridoxal kinase PdxY"/>
    <property type="match status" value="1"/>
</dbReference>
<dbReference type="Gene3D" id="3.40.1190.20">
    <property type="match status" value="1"/>
</dbReference>
<dbReference type="HAMAP" id="MF_01639">
    <property type="entry name" value="PdxY"/>
    <property type="match status" value="1"/>
</dbReference>
<dbReference type="InterPro" id="IPR013749">
    <property type="entry name" value="PM/HMP-P_kinase-1"/>
</dbReference>
<dbReference type="InterPro" id="IPR004625">
    <property type="entry name" value="PyrdxlKinase"/>
</dbReference>
<dbReference type="InterPro" id="IPR023685">
    <property type="entry name" value="Pyridoxal_kinase_PdxY"/>
</dbReference>
<dbReference type="InterPro" id="IPR029056">
    <property type="entry name" value="Ribokinase-like"/>
</dbReference>
<dbReference type="NCBIfam" id="NF004398">
    <property type="entry name" value="PRK05756.1"/>
    <property type="match status" value="1"/>
</dbReference>
<dbReference type="NCBIfam" id="TIGR00687">
    <property type="entry name" value="pyridox_kin"/>
    <property type="match status" value="1"/>
</dbReference>
<dbReference type="PANTHER" id="PTHR10534">
    <property type="entry name" value="PYRIDOXAL KINASE"/>
    <property type="match status" value="1"/>
</dbReference>
<dbReference type="PANTHER" id="PTHR10534:SF2">
    <property type="entry name" value="PYRIDOXAL KINASE"/>
    <property type="match status" value="1"/>
</dbReference>
<dbReference type="Pfam" id="PF08543">
    <property type="entry name" value="Phos_pyr_kin"/>
    <property type="match status" value="1"/>
</dbReference>
<dbReference type="SUPFAM" id="SSF53613">
    <property type="entry name" value="Ribokinase-like"/>
    <property type="match status" value="1"/>
</dbReference>
<sequence>MMKNILAIQSHVVYGHAGNSAAEFPMRRLGANVWPLNTVQFSNHTQYGKWTGCVMPPSHLTEIVQGIAAIDKLHTCDAVLSGYLGSAEQGEHILGIVRQVKAANPQAKYFCDPVMGHPEKGCIVAPGVAEFHVRHGLPASDIIAPNLVELEILCEHPVKNVEEAVLAARELIAQGPQIVLVKHLARAGYSRDRFEMLLVTADEAWHISRPLVDFGMRQPVGVGDVTSGLLLVKLLQGATLQEALEHVTAAVYEIMVTTKAMQEYELQVVAAQDRIANPEHYFSATKL</sequence>
<name>PDXY_ECOL6</name>
<organism>
    <name type="scientific">Escherichia coli O6:H1 (strain CFT073 / ATCC 700928 / UPEC)</name>
    <dbReference type="NCBI Taxonomy" id="199310"/>
    <lineage>
        <taxon>Bacteria</taxon>
        <taxon>Pseudomonadati</taxon>
        <taxon>Pseudomonadota</taxon>
        <taxon>Gammaproteobacteria</taxon>
        <taxon>Enterobacterales</taxon>
        <taxon>Enterobacteriaceae</taxon>
        <taxon>Escherichia</taxon>
    </lineage>
</organism>